<sequence>MGKFMKPGKVVLVLAGRYSGRKAVIVKNIDDGTSDRPYSHALVAGIDRYPRKVTAAMGKKKIAKRSKIKSFVKVYNYNHLMPTRYSVDIPLDKTVVNKDVFRDPALKRKARREAKVKFEERYKTGKNKWFFQKLRF</sequence>
<dbReference type="EMBL" id="X07424">
    <property type="protein sequence ID" value="CAA30313.1"/>
    <property type="molecule type" value="mRNA"/>
</dbReference>
<dbReference type="EMBL" id="BC058474">
    <property type="protein sequence ID" value="AAH58474.1"/>
    <property type="molecule type" value="mRNA"/>
</dbReference>
<dbReference type="EMBL" id="BC091566">
    <property type="protein sequence ID" value="AAH91566.1"/>
    <property type="molecule type" value="mRNA"/>
</dbReference>
<dbReference type="PIR" id="S00401">
    <property type="entry name" value="R5RT27"/>
</dbReference>
<dbReference type="RefSeq" id="NP_071959.1">
    <property type="nucleotide sequence ID" value="NM_022514.1"/>
</dbReference>
<dbReference type="SMR" id="P61354"/>
<dbReference type="BioGRID" id="249021">
    <property type="interactions" value="6"/>
</dbReference>
<dbReference type="FunCoup" id="P61354">
    <property type="interactions" value="2702"/>
</dbReference>
<dbReference type="IntAct" id="P61354">
    <property type="interactions" value="5"/>
</dbReference>
<dbReference type="MINT" id="P61354"/>
<dbReference type="STRING" id="10116.ENSRNOP00000028060"/>
<dbReference type="iPTMnet" id="P61354"/>
<dbReference type="PhosphoSitePlus" id="P61354"/>
<dbReference type="SwissPalm" id="P61354"/>
<dbReference type="jPOST" id="P61354"/>
<dbReference type="PaxDb" id="10116-ENSRNOP00000028060"/>
<dbReference type="Ensembl" id="ENSRNOT00000028060.7">
    <property type="protein sequence ID" value="ENSRNOP00000028060.3"/>
    <property type="gene ID" value="ENSRNOG00000020674.7"/>
</dbReference>
<dbReference type="GeneID" id="64306"/>
<dbReference type="KEGG" id="rno:64306"/>
<dbReference type="UCSC" id="RGD:621192">
    <property type="organism name" value="rat"/>
</dbReference>
<dbReference type="AGR" id="RGD:621192"/>
<dbReference type="CTD" id="6155"/>
<dbReference type="RGD" id="621192">
    <property type="gene designation" value="Rpl27"/>
</dbReference>
<dbReference type="eggNOG" id="KOG3418">
    <property type="taxonomic scope" value="Eukaryota"/>
</dbReference>
<dbReference type="GeneTree" id="ENSGT00390000010721"/>
<dbReference type="HOGENOM" id="CLU_067359_0_1_1"/>
<dbReference type="InParanoid" id="P61354"/>
<dbReference type="OMA" id="NQWFFTK"/>
<dbReference type="OrthoDB" id="2365484at2759"/>
<dbReference type="PhylomeDB" id="P61354"/>
<dbReference type="TreeFam" id="TF314648"/>
<dbReference type="Reactome" id="R-RNO-156827">
    <property type="pathway name" value="L13a-mediated translational silencing of Ceruloplasmin expression"/>
</dbReference>
<dbReference type="Reactome" id="R-RNO-1799339">
    <property type="pathway name" value="SRP-dependent cotranslational protein targeting to membrane"/>
</dbReference>
<dbReference type="Reactome" id="R-RNO-6791226">
    <property type="pathway name" value="Major pathway of rRNA processing in the nucleolus and cytosol"/>
</dbReference>
<dbReference type="Reactome" id="R-RNO-72689">
    <property type="pathway name" value="Formation of a pool of free 40S subunits"/>
</dbReference>
<dbReference type="Reactome" id="R-RNO-72706">
    <property type="pathway name" value="GTP hydrolysis and joining of the 60S ribosomal subunit"/>
</dbReference>
<dbReference type="Reactome" id="R-RNO-975956">
    <property type="pathway name" value="Nonsense Mediated Decay (NMD) independent of the Exon Junction Complex (EJC)"/>
</dbReference>
<dbReference type="Reactome" id="R-RNO-975957">
    <property type="pathway name" value="Nonsense Mediated Decay (NMD) enhanced by the Exon Junction Complex (EJC)"/>
</dbReference>
<dbReference type="PRO" id="PR:P61354"/>
<dbReference type="Proteomes" id="UP000002494">
    <property type="component" value="Chromosome 10"/>
</dbReference>
<dbReference type="Bgee" id="ENSRNOG00000020674">
    <property type="expression patterns" value="Expressed in thymus and 20 other cell types or tissues"/>
</dbReference>
<dbReference type="GO" id="GO:0005737">
    <property type="term" value="C:cytoplasm"/>
    <property type="evidence" value="ECO:0000266"/>
    <property type="project" value="RGD"/>
</dbReference>
<dbReference type="GO" id="GO:0098556">
    <property type="term" value="C:cytoplasmic side of rough endoplasmic reticulum membrane"/>
    <property type="evidence" value="ECO:0000250"/>
    <property type="project" value="UniProtKB"/>
</dbReference>
<dbReference type="GO" id="GO:0022625">
    <property type="term" value="C:cytosolic large ribosomal subunit"/>
    <property type="evidence" value="ECO:0000314"/>
    <property type="project" value="RGD"/>
</dbReference>
<dbReference type="GO" id="GO:0022626">
    <property type="term" value="C:cytosolic ribosome"/>
    <property type="evidence" value="ECO:0000266"/>
    <property type="project" value="RGD"/>
</dbReference>
<dbReference type="GO" id="GO:0015934">
    <property type="term" value="C:large ribosomal subunit"/>
    <property type="evidence" value="ECO:0000266"/>
    <property type="project" value="RGD"/>
</dbReference>
<dbReference type="GO" id="GO:1990904">
    <property type="term" value="C:ribonucleoprotein complex"/>
    <property type="evidence" value="ECO:0000266"/>
    <property type="project" value="RGD"/>
</dbReference>
<dbReference type="GO" id="GO:0005840">
    <property type="term" value="C:ribosome"/>
    <property type="evidence" value="ECO:0000314"/>
    <property type="project" value="RGD"/>
</dbReference>
<dbReference type="GO" id="GO:0045202">
    <property type="term" value="C:synapse"/>
    <property type="evidence" value="ECO:0000266"/>
    <property type="project" value="RGD"/>
</dbReference>
<dbReference type="GO" id="GO:0003735">
    <property type="term" value="F:structural constituent of ribosome"/>
    <property type="evidence" value="ECO:0000266"/>
    <property type="project" value="RGD"/>
</dbReference>
<dbReference type="GO" id="GO:1904044">
    <property type="term" value="P:response to aldosterone"/>
    <property type="evidence" value="ECO:0000270"/>
    <property type="project" value="RGD"/>
</dbReference>
<dbReference type="GO" id="GO:0006364">
    <property type="term" value="P:rRNA processing"/>
    <property type="evidence" value="ECO:0000250"/>
    <property type="project" value="UniProtKB"/>
</dbReference>
<dbReference type="GO" id="GO:0006412">
    <property type="term" value="P:translation"/>
    <property type="evidence" value="ECO:0007669"/>
    <property type="project" value="InterPro"/>
</dbReference>
<dbReference type="CDD" id="cd06090">
    <property type="entry name" value="KOW_RPL27"/>
    <property type="match status" value="1"/>
</dbReference>
<dbReference type="FunFam" id="2.30.30.770:FF:000001">
    <property type="entry name" value="60S ribosomal protein L27"/>
    <property type="match status" value="1"/>
</dbReference>
<dbReference type="Gene3D" id="2.30.30.770">
    <property type="match status" value="1"/>
</dbReference>
<dbReference type="InterPro" id="IPR005824">
    <property type="entry name" value="KOW"/>
</dbReference>
<dbReference type="InterPro" id="IPR001141">
    <property type="entry name" value="Ribosomal_eL27"/>
</dbReference>
<dbReference type="InterPro" id="IPR018262">
    <property type="entry name" value="Ribosomal_eL27_CS"/>
</dbReference>
<dbReference type="InterPro" id="IPR041991">
    <property type="entry name" value="Ribosomal_eL27_KOW"/>
</dbReference>
<dbReference type="InterPro" id="IPR038655">
    <property type="entry name" value="Ribosomal_eL27_sf"/>
</dbReference>
<dbReference type="InterPro" id="IPR008991">
    <property type="entry name" value="Translation_prot_SH3-like_sf"/>
</dbReference>
<dbReference type="PANTHER" id="PTHR10497">
    <property type="entry name" value="60S RIBOSOMAL PROTEIN L27"/>
    <property type="match status" value="1"/>
</dbReference>
<dbReference type="Pfam" id="PF00467">
    <property type="entry name" value="KOW"/>
    <property type="match status" value="1"/>
</dbReference>
<dbReference type="Pfam" id="PF01777">
    <property type="entry name" value="Ribosomal_L27e"/>
    <property type="match status" value="1"/>
</dbReference>
<dbReference type="SMART" id="SM00739">
    <property type="entry name" value="KOW"/>
    <property type="match status" value="1"/>
</dbReference>
<dbReference type="SUPFAM" id="SSF50104">
    <property type="entry name" value="Translation proteins SH3-like domain"/>
    <property type="match status" value="1"/>
</dbReference>
<dbReference type="PROSITE" id="PS01107">
    <property type="entry name" value="RIBOSOMAL_L27E"/>
    <property type="match status" value="1"/>
</dbReference>
<feature type="chain" id="PRO_0000126079" description="Large ribosomal subunit protein eL27">
    <location>
        <begin position="1"/>
        <end position="136"/>
    </location>
</feature>
<feature type="domain" description="KOW">
    <location>
        <begin position="5"/>
        <end position="40"/>
    </location>
</feature>
<feature type="modified residue" description="N6-acetyllysine" evidence="2">
    <location>
        <position position="27"/>
    </location>
</feature>
<feature type="modified residue" description="N6-acetyllysine" evidence="2">
    <location>
        <position position="93"/>
    </location>
</feature>
<evidence type="ECO:0000250" key="1">
    <source>
        <dbReference type="UniProtKB" id="A1XQU5"/>
    </source>
</evidence>
<evidence type="ECO:0000250" key="2">
    <source>
        <dbReference type="UniProtKB" id="P61353"/>
    </source>
</evidence>
<evidence type="ECO:0000305" key="3"/>
<comment type="function">
    <text evidence="1 2">Component of the large ribosomal subunit (By similarity). Required for proper rRNA processing and maturation of 28S and 5.8S rRNAs (By similarity).</text>
</comment>
<comment type="subunit">
    <text evidence="1 2">Component of the large ribosomal subunit (By similarity). Interacts with RRP1B (By similarity). Component of the large ribosomal subunit. Interacts with RRP1B. Interacts with DHX33 (By similarity).</text>
</comment>
<comment type="subcellular location">
    <subcellularLocation>
        <location evidence="2">Cytoplasm</location>
        <location evidence="2">Cytosol</location>
    </subcellularLocation>
    <subcellularLocation>
        <location evidence="2">Cytoplasm</location>
    </subcellularLocation>
    <subcellularLocation>
        <location evidence="1">Rough endoplasmic reticulum</location>
    </subcellularLocation>
    <text evidence="1 2">Detected on cytosolic polysomes (By similarity). Detected in ribosomes that are associated with the rough endoplasmic reticulum (By similarity).</text>
</comment>
<comment type="similarity">
    <text evidence="3">Belongs to the eukaryotic ribosomal protein eL27 family.</text>
</comment>
<reference key="1">
    <citation type="journal article" date="1988" name="Eur. J. Biochem.">
        <title>Nucleotide sequence of cloned cDNA specific for rat ribosomal protein L27.</title>
        <authorList>
            <person name="Tanaka T."/>
            <person name="Kuwano Y."/>
            <person name="Ishikawa K."/>
            <person name="Ogata K."/>
        </authorList>
    </citation>
    <scope>NUCLEOTIDE SEQUENCE [MRNA]</scope>
    <source>
        <strain>Wistar</strain>
        <tissue>Liver</tissue>
    </source>
</reference>
<reference key="2">
    <citation type="journal article" date="2004" name="Genome Res.">
        <title>The status, quality, and expansion of the NIH full-length cDNA project: the Mammalian Gene Collection (MGC).</title>
        <authorList>
            <consortium name="The MGC Project Team"/>
        </authorList>
    </citation>
    <scope>NUCLEOTIDE SEQUENCE [LARGE SCALE MRNA]</scope>
    <source>
        <tissue>Pituitary</tissue>
        <tissue>Thymus</tissue>
    </source>
</reference>
<proteinExistence type="evidence at transcript level"/>
<accession>P61354</accession>
<accession>P08526</accession>
<accession>Q5BJ97</accession>
<gene>
    <name type="primary">Rpl27</name>
</gene>
<organism>
    <name type="scientific">Rattus norvegicus</name>
    <name type="common">Rat</name>
    <dbReference type="NCBI Taxonomy" id="10116"/>
    <lineage>
        <taxon>Eukaryota</taxon>
        <taxon>Metazoa</taxon>
        <taxon>Chordata</taxon>
        <taxon>Craniata</taxon>
        <taxon>Vertebrata</taxon>
        <taxon>Euteleostomi</taxon>
        <taxon>Mammalia</taxon>
        <taxon>Eutheria</taxon>
        <taxon>Euarchontoglires</taxon>
        <taxon>Glires</taxon>
        <taxon>Rodentia</taxon>
        <taxon>Myomorpha</taxon>
        <taxon>Muroidea</taxon>
        <taxon>Muridae</taxon>
        <taxon>Murinae</taxon>
        <taxon>Rattus</taxon>
    </lineage>
</organism>
<keyword id="KW-0007">Acetylation</keyword>
<keyword id="KW-0963">Cytoplasm</keyword>
<keyword id="KW-0256">Endoplasmic reticulum</keyword>
<keyword id="KW-1185">Reference proteome</keyword>
<keyword id="KW-0687">Ribonucleoprotein</keyword>
<keyword id="KW-0689">Ribosomal protein</keyword>
<name>RL27_RAT</name>
<protein>
    <recommendedName>
        <fullName evidence="3">Large ribosomal subunit protein eL27</fullName>
    </recommendedName>
    <alternativeName>
        <fullName>60S ribosomal protein L27</fullName>
    </alternativeName>
</protein>